<dbReference type="EC" id="2.7.1.48" evidence="1"/>
<dbReference type="EMBL" id="CP000764">
    <property type="protein sequence ID" value="ABS23317.1"/>
    <property type="molecule type" value="Genomic_DNA"/>
</dbReference>
<dbReference type="RefSeq" id="WP_012095554.1">
    <property type="nucleotide sequence ID" value="NC_009674.1"/>
</dbReference>
<dbReference type="SMR" id="A7GT59"/>
<dbReference type="STRING" id="315749.Bcer98_3093"/>
<dbReference type="GeneID" id="33898340"/>
<dbReference type="KEGG" id="bcy:Bcer98_3093"/>
<dbReference type="eggNOG" id="COG0572">
    <property type="taxonomic scope" value="Bacteria"/>
</dbReference>
<dbReference type="HOGENOM" id="CLU_021278_1_2_9"/>
<dbReference type="OrthoDB" id="9777642at2"/>
<dbReference type="UniPathway" id="UPA00574">
    <property type="reaction ID" value="UER00637"/>
</dbReference>
<dbReference type="UniPathway" id="UPA00579">
    <property type="reaction ID" value="UER00640"/>
</dbReference>
<dbReference type="Proteomes" id="UP000002300">
    <property type="component" value="Chromosome"/>
</dbReference>
<dbReference type="GO" id="GO:0005737">
    <property type="term" value="C:cytoplasm"/>
    <property type="evidence" value="ECO:0007669"/>
    <property type="project" value="UniProtKB-SubCell"/>
</dbReference>
<dbReference type="GO" id="GO:0005524">
    <property type="term" value="F:ATP binding"/>
    <property type="evidence" value="ECO:0007669"/>
    <property type="project" value="UniProtKB-UniRule"/>
</dbReference>
<dbReference type="GO" id="GO:0043771">
    <property type="term" value="F:cytidine kinase activity"/>
    <property type="evidence" value="ECO:0007669"/>
    <property type="project" value="RHEA"/>
</dbReference>
<dbReference type="GO" id="GO:0004849">
    <property type="term" value="F:uridine kinase activity"/>
    <property type="evidence" value="ECO:0007669"/>
    <property type="project" value="UniProtKB-UniRule"/>
</dbReference>
<dbReference type="GO" id="GO:0044211">
    <property type="term" value="P:CTP salvage"/>
    <property type="evidence" value="ECO:0007669"/>
    <property type="project" value="UniProtKB-UniRule"/>
</dbReference>
<dbReference type="GO" id="GO:0044206">
    <property type="term" value="P:UMP salvage"/>
    <property type="evidence" value="ECO:0007669"/>
    <property type="project" value="UniProtKB-UniRule"/>
</dbReference>
<dbReference type="CDD" id="cd02023">
    <property type="entry name" value="UMPK"/>
    <property type="match status" value="1"/>
</dbReference>
<dbReference type="Gene3D" id="3.40.50.300">
    <property type="entry name" value="P-loop containing nucleotide triphosphate hydrolases"/>
    <property type="match status" value="1"/>
</dbReference>
<dbReference type="HAMAP" id="MF_00551">
    <property type="entry name" value="Uridine_kinase"/>
    <property type="match status" value="1"/>
</dbReference>
<dbReference type="InterPro" id="IPR027417">
    <property type="entry name" value="P-loop_NTPase"/>
</dbReference>
<dbReference type="InterPro" id="IPR006083">
    <property type="entry name" value="PRK/URK"/>
</dbReference>
<dbReference type="InterPro" id="IPR026008">
    <property type="entry name" value="Uridine_kinase"/>
</dbReference>
<dbReference type="InterPro" id="IPR000764">
    <property type="entry name" value="Uridine_kinase-like"/>
</dbReference>
<dbReference type="NCBIfam" id="NF004018">
    <property type="entry name" value="PRK05480.1"/>
    <property type="match status" value="1"/>
</dbReference>
<dbReference type="NCBIfam" id="TIGR00235">
    <property type="entry name" value="udk"/>
    <property type="match status" value="1"/>
</dbReference>
<dbReference type="PANTHER" id="PTHR10285">
    <property type="entry name" value="URIDINE KINASE"/>
    <property type="match status" value="1"/>
</dbReference>
<dbReference type="Pfam" id="PF00485">
    <property type="entry name" value="PRK"/>
    <property type="match status" value="1"/>
</dbReference>
<dbReference type="PRINTS" id="PR00988">
    <property type="entry name" value="URIDINKINASE"/>
</dbReference>
<dbReference type="SUPFAM" id="SSF52540">
    <property type="entry name" value="P-loop containing nucleoside triphosphate hydrolases"/>
    <property type="match status" value="1"/>
</dbReference>
<accession>A7GT59</accession>
<protein>
    <recommendedName>
        <fullName evidence="1">Uridine kinase</fullName>
        <ecNumber evidence="1">2.7.1.48</ecNumber>
    </recommendedName>
    <alternativeName>
        <fullName evidence="1">Cytidine monophosphokinase</fullName>
    </alternativeName>
    <alternativeName>
        <fullName evidence="1">Uridine monophosphokinase</fullName>
    </alternativeName>
</protein>
<reference key="1">
    <citation type="journal article" date="2008" name="Chem. Biol. Interact.">
        <title>Extending the Bacillus cereus group genomics to putative food-borne pathogens of different toxicity.</title>
        <authorList>
            <person name="Lapidus A."/>
            <person name="Goltsman E."/>
            <person name="Auger S."/>
            <person name="Galleron N."/>
            <person name="Segurens B."/>
            <person name="Dossat C."/>
            <person name="Land M.L."/>
            <person name="Broussolle V."/>
            <person name="Brillard J."/>
            <person name="Guinebretiere M.-H."/>
            <person name="Sanchis V."/>
            <person name="Nguen-the C."/>
            <person name="Lereclus D."/>
            <person name="Richardson P."/>
            <person name="Wincker P."/>
            <person name="Weissenbach J."/>
            <person name="Ehrlich S.D."/>
            <person name="Sorokin A."/>
        </authorList>
    </citation>
    <scope>NUCLEOTIDE SEQUENCE [LARGE SCALE GENOMIC DNA]</scope>
    <source>
        <strain>DSM 22905 / CIP 110041 / 391-98 / NVH 391-98</strain>
    </source>
</reference>
<organism>
    <name type="scientific">Bacillus cytotoxicus (strain DSM 22905 / CIP 110041 / 391-98 / NVH 391-98)</name>
    <dbReference type="NCBI Taxonomy" id="315749"/>
    <lineage>
        <taxon>Bacteria</taxon>
        <taxon>Bacillati</taxon>
        <taxon>Bacillota</taxon>
        <taxon>Bacilli</taxon>
        <taxon>Bacillales</taxon>
        <taxon>Bacillaceae</taxon>
        <taxon>Bacillus</taxon>
        <taxon>Bacillus cereus group</taxon>
    </lineage>
</organism>
<comment type="catalytic activity">
    <reaction evidence="1">
        <text>uridine + ATP = UMP + ADP + H(+)</text>
        <dbReference type="Rhea" id="RHEA:16825"/>
        <dbReference type="ChEBI" id="CHEBI:15378"/>
        <dbReference type="ChEBI" id="CHEBI:16704"/>
        <dbReference type="ChEBI" id="CHEBI:30616"/>
        <dbReference type="ChEBI" id="CHEBI:57865"/>
        <dbReference type="ChEBI" id="CHEBI:456216"/>
        <dbReference type="EC" id="2.7.1.48"/>
    </reaction>
</comment>
<comment type="catalytic activity">
    <reaction evidence="1">
        <text>cytidine + ATP = CMP + ADP + H(+)</text>
        <dbReference type="Rhea" id="RHEA:24674"/>
        <dbReference type="ChEBI" id="CHEBI:15378"/>
        <dbReference type="ChEBI" id="CHEBI:17562"/>
        <dbReference type="ChEBI" id="CHEBI:30616"/>
        <dbReference type="ChEBI" id="CHEBI:60377"/>
        <dbReference type="ChEBI" id="CHEBI:456216"/>
        <dbReference type="EC" id="2.7.1.48"/>
    </reaction>
</comment>
<comment type="pathway">
    <text evidence="1">Pyrimidine metabolism; CTP biosynthesis via salvage pathway; CTP from cytidine: step 1/3.</text>
</comment>
<comment type="pathway">
    <text evidence="1">Pyrimidine metabolism; UMP biosynthesis via salvage pathway; UMP from uridine: step 1/1.</text>
</comment>
<comment type="subcellular location">
    <subcellularLocation>
        <location evidence="1">Cytoplasm</location>
    </subcellularLocation>
</comment>
<comment type="similarity">
    <text evidence="1">Belongs to the uridine kinase family.</text>
</comment>
<proteinExistence type="inferred from homology"/>
<sequence length="212" mass="24365">MGTNKPVVIGIAGGSGSGKTSVTKAIFDHFQGHSILILEQDYYYKDQSHLPMEERLKTNYDHPLAFDNDLLIEHLHQLLAYKMIEKPVYDYTLHTRSEEVIPVEPKDVIILEGILVLEDPRLCELMDIKLFVDTDADLRILRRMQRDIKERGRTMDSVIEQYVNVVRPMHNQFIEPSKKFADIIIPEGGQNHVAIDIMVTKIATILEEKVNL</sequence>
<name>URK_BACCN</name>
<keyword id="KW-0067">ATP-binding</keyword>
<keyword id="KW-0963">Cytoplasm</keyword>
<keyword id="KW-0418">Kinase</keyword>
<keyword id="KW-0547">Nucleotide-binding</keyword>
<keyword id="KW-0808">Transferase</keyword>
<feature type="chain" id="PRO_1000081966" description="Uridine kinase">
    <location>
        <begin position="1"/>
        <end position="212"/>
    </location>
</feature>
<feature type="binding site" evidence="1">
    <location>
        <begin position="13"/>
        <end position="20"/>
    </location>
    <ligand>
        <name>ATP</name>
        <dbReference type="ChEBI" id="CHEBI:30616"/>
    </ligand>
</feature>
<evidence type="ECO:0000255" key="1">
    <source>
        <dbReference type="HAMAP-Rule" id="MF_00551"/>
    </source>
</evidence>
<gene>
    <name evidence="1" type="primary">udk</name>
    <name type="ordered locus">Bcer98_3093</name>
</gene>